<evidence type="ECO:0000255" key="1">
    <source>
        <dbReference type="HAMAP-Rule" id="MF_00270"/>
    </source>
</evidence>
<evidence type="ECO:0000305" key="2"/>
<protein>
    <recommendedName>
        <fullName evidence="1">Small ribosomal subunit protein bS18</fullName>
    </recommendedName>
    <alternativeName>
        <fullName evidence="2">30S ribosomal protein S18</fullName>
    </alternativeName>
</protein>
<organism>
    <name type="scientific">Bacillus licheniformis (strain ATCC 14580 / DSM 13 / JCM 2505 / CCUG 7422 / NBRC 12200 / NCIMB 9375 / NCTC 10341 / NRRL NRS-1264 / Gibson 46)</name>
    <dbReference type="NCBI Taxonomy" id="279010"/>
    <lineage>
        <taxon>Bacteria</taxon>
        <taxon>Bacillati</taxon>
        <taxon>Bacillota</taxon>
        <taxon>Bacilli</taxon>
        <taxon>Bacillales</taxon>
        <taxon>Bacillaceae</taxon>
        <taxon>Bacillus</taxon>
    </lineage>
</organism>
<gene>
    <name evidence="1" type="primary">rpsR</name>
    <name type="ordered locus">BLi04361</name>
    <name type="ordered locus">BL00098</name>
</gene>
<feature type="chain" id="PRO_1000003444" description="Small ribosomal subunit protein bS18">
    <location>
        <begin position="1"/>
        <end position="79"/>
    </location>
</feature>
<keyword id="KW-1185">Reference proteome</keyword>
<keyword id="KW-0687">Ribonucleoprotein</keyword>
<keyword id="KW-0689">Ribosomal protein</keyword>
<keyword id="KW-0694">RNA-binding</keyword>
<keyword id="KW-0699">rRNA-binding</keyword>
<proteinExistence type="inferred from homology"/>
<comment type="function">
    <text evidence="1">Binds as a heterodimer with protein bS6 to the central domain of the 16S rRNA, where it helps stabilize the platform of the 30S subunit.</text>
</comment>
<comment type="subunit">
    <text evidence="1">Part of the 30S ribosomal subunit. Forms a tight heterodimer with protein bS6.</text>
</comment>
<comment type="similarity">
    <text evidence="1">Belongs to the bacterial ribosomal protein bS18 family.</text>
</comment>
<sequence length="79" mass="8997">MAGGRRGGRAKRRKVCYFTSNGITHIDYKDVDLLRKFISERGKILPRRVTGTSAKYQRKLTVAIKRARQMALLPYVAGE</sequence>
<name>RS18_BACLD</name>
<dbReference type="EMBL" id="CP000002">
    <property type="protein sequence ID" value="AAU25787.1"/>
    <property type="molecule type" value="Genomic_DNA"/>
</dbReference>
<dbReference type="EMBL" id="AE017333">
    <property type="protein sequence ID" value="AAU43169.1"/>
    <property type="molecule type" value="Genomic_DNA"/>
</dbReference>
<dbReference type="RefSeq" id="WP_003178022.1">
    <property type="nucleotide sequence ID" value="NC_006322.1"/>
</dbReference>
<dbReference type="SMR" id="Q65CP5"/>
<dbReference type="STRING" id="279010.BL00098"/>
<dbReference type="GeneID" id="92859069"/>
<dbReference type="KEGG" id="bld:BLi04361"/>
<dbReference type="KEGG" id="bli:BL00098"/>
<dbReference type="eggNOG" id="COG0238">
    <property type="taxonomic scope" value="Bacteria"/>
</dbReference>
<dbReference type="HOGENOM" id="CLU_148710_2_2_9"/>
<dbReference type="Proteomes" id="UP000000606">
    <property type="component" value="Chromosome"/>
</dbReference>
<dbReference type="GO" id="GO:0022627">
    <property type="term" value="C:cytosolic small ribosomal subunit"/>
    <property type="evidence" value="ECO:0007669"/>
    <property type="project" value="TreeGrafter"/>
</dbReference>
<dbReference type="GO" id="GO:0070181">
    <property type="term" value="F:small ribosomal subunit rRNA binding"/>
    <property type="evidence" value="ECO:0007669"/>
    <property type="project" value="TreeGrafter"/>
</dbReference>
<dbReference type="GO" id="GO:0003735">
    <property type="term" value="F:structural constituent of ribosome"/>
    <property type="evidence" value="ECO:0007669"/>
    <property type="project" value="InterPro"/>
</dbReference>
<dbReference type="GO" id="GO:0006412">
    <property type="term" value="P:translation"/>
    <property type="evidence" value="ECO:0007669"/>
    <property type="project" value="UniProtKB-UniRule"/>
</dbReference>
<dbReference type="FunFam" id="4.10.640.10:FF:000003">
    <property type="entry name" value="30S ribosomal protein S18"/>
    <property type="match status" value="1"/>
</dbReference>
<dbReference type="Gene3D" id="4.10.640.10">
    <property type="entry name" value="Ribosomal protein S18"/>
    <property type="match status" value="1"/>
</dbReference>
<dbReference type="HAMAP" id="MF_00270">
    <property type="entry name" value="Ribosomal_bS18"/>
    <property type="match status" value="1"/>
</dbReference>
<dbReference type="InterPro" id="IPR001648">
    <property type="entry name" value="Ribosomal_bS18"/>
</dbReference>
<dbReference type="InterPro" id="IPR018275">
    <property type="entry name" value="Ribosomal_bS18_CS"/>
</dbReference>
<dbReference type="InterPro" id="IPR036870">
    <property type="entry name" value="Ribosomal_bS18_sf"/>
</dbReference>
<dbReference type="NCBIfam" id="TIGR00165">
    <property type="entry name" value="S18"/>
    <property type="match status" value="1"/>
</dbReference>
<dbReference type="PANTHER" id="PTHR13479">
    <property type="entry name" value="30S RIBOSOMAL PROTEIN S18"/>
    <property type="match status" value="1"/>
</dbReference>
<dbReference type="PANTHER" id="PTHR13479:SF40">
    <property type="entry name" value="SMALL RIBOSOMAL SUBUNIT PROTEIN BS18M"/>
    <property type="match status" value="1"/>
</dbReference>
<dbReference type="Pfam" id="PF01084">
    <property type="entry name" value="Ribosomal_S18"/>
    <property type="match status" value="1"/>
</dbReference>
<dbReference type="PRINTS" id="PR00974">
    <property type="entry name" value="RIBOSOMALS18"/>
</dbReference>
<dbReference type="SUPFAM" id="SSF46911">
    <property type="entry name" value="Ribosomal protein S18"/>
    <property type="match status" value="1"/>
</dbReference>
<dbReference type="PROSITE" id="PS00057">
    <property type="entry name" value="RIBOSOMAL_S18"/>
    <property type="match status" value="1"/>
</dbReference>
<reference key="1">
    <citation type="journal article" date="2004" name="J. Mol. Microbiol. Biotechnol.">
        <title>The complete genome sequence of Bacillus licheniformis DSM13, an organism with great industrial potential.</title>
        <authorList>
            <person name="Veith B."/>
            <person name="Herzberg C."/>
            <person name="Steckel S."/>
            <person name="Feesche J."/>
            <person name="Maurer K.H."/>
            <person name="Ehrenreich P."/>
            <person name="Baeumer S."/>
            <person name="Henne A."/>
            <person name="Liesegang H."/>
            <person name="Merkl R."/>
            <person name="Ehrenreich A."/>
            <person name="Gottschalk G."/>
        </authorList>
    </citation>
    <scope>NUCLEOTIDE SEQUENCE [LARGE SCALE GENOMIC DNA]</scope>
    <source>
        <strain>ATCC 14580 / DSM 13 / JCM 2505 / CCUG 7422 / NBRC 12200 / NCIMB 9375 / NCTC 10341 / NRRL NRS-1264 / Gibson 46</strain>
    </source>
</reference>
<reference key="2">
    <citation type="journal article" date="2004" name="Genome Biol.">
        <title>Complete genome sequence of the industrial bacterium Bacillus licheniformis and comparisons with closely related Bacillus species.</title>
        <authorList>
            <person name="Rey M.W."/>
            <person name="Ramaiya P."/>
            <person name="Nelson B.A."/>
            <person name="Brody-Karpin S.D."/>
            <person name="Zaretsky E.J."/>
            <person name="Tang M."/>
            <person name="Lopez de Leon A."/>
            <person name="Xiang H."/>
            <person name="Gusti V."/>
            <person name="Clausen I.G."/>
            <person name="Olsen P.B."/>
            <person name="Rasmussen M.D."/>
            <person name="Andersen J.T."/>
            <person name="Joergensen P.L."/>
            <person name="Larsen T.S."/>
            <person name="Sorokin A."/>
            <person name="Bolotin A."/>
            <person name="Lapidus A."/>
            <person name="Galleron N."/>
            <person name="Ehrlich S.D."/>
            <person name="Berka R.M."/>
        </authorList>
    </citation>
    <scope>NUCLEOTIDE SEQUENCE [LARGE SCALE GENOMIC DNA]</scope>
    <source>
        <strain>ATCC 14580 / DSM 13 / JCM 2505 / CCUG 7422 / NBRC 12200 / NCIMB 9375 / NCTC 10341 / NRRL NRS-1264 / Gibson 46</strain>
    </source>
</reference>
<accession>Q65CP5</accession>
<accession>Q62N74</accession>